<sequence>MKTSMQRKLDQLSTRLAELNDLLSRENVTADLDQYRKLTREHAELGPVVEQYALWRQSRSDETAAQELLADPSMRDFAEDEIRSAREGMARLETELQKMLLPKDPNDDRNIFLEIRAGTGGDESALFAGDLLRMYLRFAERQRWQVEMMSESASDLGGYKEVIVRIAGQGAYSRLKFESGGHRVQRVPATETQGRIHTSACTVAVMPEADEIGEVEINPADLRIDTFRASGAGGQHINKTDSAVRVTHIPTGIVVECQDDRSQHKNKDRALKVLAARIKDKQYHEQHAKEAATRKSLIGSGDRSERIRTYNFPQGRMTDHRINLTLYRLEAIMDGDLDELIGALVTEHQAELLASLGEAD</sequence>
<proteinExistence type="inferred from homology"/>
<protein>
    <recommendedName>
        <fullName evidence="1">Peptide chain release factor 1</fullName>
        <shortName evidence="1">RF-1</shortName>
    </recommendedName>
</protein>
<name>RF1_BURCH</name>
<gene>
    <name evidence="1" type="primary">prfA</name>
    <name type="ordered locus">Bcen2424_0510</name>
</gene>
<evidence type="ECO:0000255" key="1">
    <source>
        <dbReference type="HAMAP-Rule" id="MF_00093"/>
    </source>
</evidence>
<comment type="function">
    <text evidence="1">Peptide chain release factor 1 directs the termination of translation in response to the peptide chain termination codons UAG and UAA.</text>
</comment>
<comment type="subcellular location">
    <subcellularLocation>
        <location evidence="1">Cytoplasm</location>
    </subcellularLocation>
</comment>
<comment type="PTM">
    <text evidence="1">Methylated by PrmC. Methylation increases the termination efficiency of RF1.</text>
</comment>
<comment type="similarity">
    <text evidence="1">Belongs to the prokaryotic/mitochondrial release factor family.</text>
</comment>
<organism>
    <name type="scientific">Burkholderia cenocepacia (strain HI2424)</name>
    <dbReference type="NCBI Taxonomy" id="331272"/>
    <lineage>
        <taxon>Bacteria</taxon>
        <taxon>Pseudomonadati</taxon>
        <taxon>Pseudomonadota</taxon>
        <taxon>Betaproteobacteria</taxon>
        <taxon>Burkholderiales</taxon>
        <taxon>Burkholderiaceae</taxon>
        <taxon>Burkholderia</taxon>
        <taxon>Burkholderia cepacia complex</taxon>
    </lineage>
</organism>
<feature type="chain" id="PRO_1000004862" description="Peptide chain release factor 1">
    <location>
        <begin position="1"/>
        <end position="360"/>
    </location>
</feature>
<feature type="modified residue" description="N5-methylglutamine" evidence="1">
    <location>
        <position position="235"/>
    </location>
</feature>
<dbReference type="EMBL" id="CP000458">
    <property type="protein sequence ID" value="ABK07264.1"/>
    <property type="molecule type" value="Genomic_DNA"/>
</dbReference>
<dbReference type="RefSeq" id="WP_006477064.1">
    <property type="nucleotide sequence ID" value="NC_008542.1"/>
</dbReference>
<dbReference type="SMR" id="A0K437"/>
<dbReference type="GeneID" id="83047278"/>
<dbReference type="KEGG" id="bch:Bcen2424_0510"/>
<dbReference type="HOGENOM" id="CLU_036856_0_1_4"/>
<dbReference type="GO" id="GO:0005737">
    <property type="term" value="C:cytoplasm"/>
    <property type="evidence" value="ECO:0007669"/>
    <property type="project" value="UniProtKB-SubCell"/>
</dbReference>
<dbReference type="GO" id="GO:0016149">
    <property type="term" value="F:translation release factor activity, codon specific"/>
    <property type="evidence" value="ECO:0007669"/>
    <property type="project" value="UniProtKB-UniRule"/>
</dbReference>
<dbReference type="FunFam" id="3.30.160.20:FF:000004">
    <property type="entry name" value="Peptide chain release factor 1"/>
    <property type="match status" value="1"/>
</dbReference>
<dbReference type="FunFam" id="3.30.70.1660:FF:000002">
    <property type="entry name" value="Peptide chain release factor 1"/>
    <property type="match status" value="1"/>
</dbReference>
<dbReference type="FunFam" id="3.30.70.1660:FF:000004">
    <property type="entry name" value="Peptide chain release factor 1"/>
    <property type="match status" value="1"/>
</dbReference>
<dbReference type="Gene3D" id="3.30.160.20">
    <property type="match status" value="1"/>
</dbReference>
<dbReference type="Gene3D" id="3.30.70.1660">
    <property type="match status" value="2"/>
</dbReference>
<dbReference type="Gene3D" id="6.10.140.1950">
    <property type="match status" value="1"/>
</dbReference>
<dbReference type="HAMAP" id="MF_00093">
    <property type="entry name" value="Rel_fac_1"/>
    <property type="match status" value="1"/>
</dbReference>
<dbReference type="InterPro" id="IPR005139">
    <property type="entry name" value="PCRF"/>
</dbReference>
<dbReference type="InterPro" id="IPR000352">
    <property type="entry name" value="Pep_chain_release_fac_I"/>
</dbReference>
<dbReference type="InterPro" id="IPR045853">
    <property type="entry name" value="Pep_chain_release_fac_I_sf"/>
</dbReference>
<dbReference type="InterPro" id="IPR050057">
    <property type="entry name" value="Prokaryotic/Mito_RF"/>
</dbReference>
<dbReference type="InterPro" id="IPR004373">
    <property type="entry name" value="RF-1"/>
</dbReference>
<dbReference type="NCBIfam" id="TIGR00019">
    <property type="entry name" value="prfA"/>
    <property type="match status" value="1"/>
</dbReference>
<dbReference type="NCBIfam" id="NF001859">
    <property type="entry name" value="PRK00591.1"/>
    <property type="match status" value="1"/>
</dbReference>
<dbReference type="PANTHER" id="PTHR43804">
    <property type="entry name" value="LD18447P"/>
    <property type="match status" value="1"/>
</dbReference>
<dbReference type="PANTHER" id="PTHR43804:SF7">
    <property type="entry name" value="LD18447P"/>
    <property type="match status" value="1"/>
</dbReference>
<dbReference type="Pfam" id="PF03462">
    <property type="entry name" value="PCRF"/>
    <property type="match status" value="1"/>
</dbReference>
<dbReference type="Pfam" id="PF00472">
    <property type="entry name" value="RF-1"/>
    <property type="match status" value="1"/>
</dbReference>
<dbReference type="SMART" id="SM00937">
    <property type="entry name" value="PCRF"/>
    <property type="match status" value="1"/>
</dbReference>
<dbReference type="SUPFAM" id="SSF75620">
    <property type="entry name" value="Release factor"/>
    <property type="match status" value="1"/>
</dbReference>
<dbReference type="PROSITE" id="PS00745">
    <property type="entry name" value="RF_PROK_I"/>
    <property type="match status" value="1"/>
</dbReference>
<keyword id="KW-0963">Cytoplasm</keyword>
<keyword id="KW-0488">Methylation</keyword>
<keyword id="KW-0648">Protein biosynthesis</keyword>
<accession>A0K437</accession>
<reference key="1">
    <citation type="submission" date="2006-08" db="EMBL/GenBank/DDBJ databases">
        <title>Complete sequence of chromosome 1 of Burkholderia cenocepacia HI2424.</title>
        <authorList>
            <person name="Copeland A."/>
            <person name="Lucas S."/>
            <person name="Lapidus A."/>
            <person name="Barry K."/>
            <person name="Detter J.C."/>
            <person name="Glavina del Rio T."/>
            <person name="Hammon N."/>
            <person name="Israni S."/>
            <person name="Pitluck S."/>
            <person name="Chain P."/>
            <person name="Malfatti S."/>
            <person name="Shin M."/>
            <person name="Vergez L."/>
            <person name="Schmutz J."/>
            <person name="Larimer F."/>
            <person name="Land M."/>
            <person name="Hauser L."/>
            <person name="Kyrpides N."/>
            <person name="Kim E."/>
            <person name="LiPuma J.J."/>
            <person name="Gonzalez C.F."/>
            <person name="Konstantinidis K."/>
            <person name="Tiedje J.M."/>
            <person name="Richardson P."/>
        </authorList>
    </citation>
    <scope>NUCLEOTIDE SEQUENCE [LARGE SCALE GENOMIC DNA]</scope>
    <source>
        <strain>HI2424</strain>
    </source>
</reference>